<proteinExistence type="uncertain"/>
<name>INTG_ECOLI</name>
<comment type="similarity">
    <text evidence="1">Belongs to the 'phage' integrase family.</text>
</comment>
<comment type="caution">
    <text evidence="1">Could be the product of a pseudogene.</text>
</comment>
<dbReference type="EMBL" id="U00096">
    <property type="status" value="NOT_ANNOTATED_CDS"/>
    <property type="molecule type" value="Genomic_DNA"/>
</dbReference>
<dbReference type="PIR" id="E64957">
    <property type="entry name" value="E64957"/>
</dbReference>
<dbReference type="KEGG" id="ecoc:C3026_10970"/>
<dbReference type="InParanoid" id="P76323"/>
<dbReference type="Proteomes" id="UP000000625">
    <property type="component" value="Chromosome"/>
</dbReference>
<dbReference type="GO" id="GO:0015074">
    <property type="term" value="P:DNA integration"/>
    <property type="evidence" value="ECO:0007669"/>
    <property type="project" value="UniProtKB-KW"/>
</dbReference>
<dbReference type="GO" id="GO:0006310">
    <property type="term" value="P:DNA recombination"/>
    <property type="evidence" value="ECO:0007669"/>
    <property type="project" value="UniProtKB-KW"/>
</dbReference>
<dbReference type="GO" id="GO:0075713">
    <property type="term" value="P:establishment of integrated proviral latency"/>
    <property type="evidence" value="ECO:0007669"/>
    <property type="project" value="UniProtKB-KW"/>
</dbReference>
<dbReference type="GO" id="GO:0046718">
    <property type="term" value="P:symbiont entry into host cell"/>
    <property type="evidence" value="ECO:0007669"/>
    <property type="project" value="UniProtKB-KW"/>
</dbReference>
<dbReference type="GO" id="GO:0044826">
    <property type="term" value="P:viral genome integration into host DNA"/>
    <property type="evidence" value="ECO:0007669"/>
    <property type="project" value="UniProtKB-KW"/>
</dbReference>
<gene>
    <name type="primary">intG</name>
    <name type="ordered locus">b1936</name>
</gene>
<sequence>MVVTTSDVVMCQMRRSDVQGGYRVYGSWMAENVQDQVSILNQKLSEFAPSMPHAVRSDVINNRLQNLHLHAHHFLIRRHQLITHLNPHLHRN</sequence>
<keyword id="KW-0229">DNA integration</keyword>
<keyword id="KW-0233">DNA recombination</keyword>
<keyword id="KW-1185">Reference proteome</keyword>
<keyword id="KW-1179">Viral genome integration</keyword>
<keyword id="KW-1160">Virus entry into host cell</keyword>
<organism>
    <name type="scientific">Escherichia coli (strain K12)</name>
    <dbReference type="NCBI Taxonomy" id="83333"/>
    <lineage>
        <taxon>Bacteria</taxon>
        <taxon>Pseudomonadati</taxon>
        <taxon>Pseudomonadota</taxon>
        <taxon>Gammaproteobacteria</taxon>
        <taxon>Enterobacterales</taxon>
        <taxon>Enterobacteriaceae</taxon>
        <taxon>Escherichia</taxon>
    </lineage>
</organism>
<evidence type="ECO:0000305" key="1"/>
<accession>P76323</accession>
<reference key="1">
    <citation type="journal article" date="1997" name="Science">
        <title>The complete genome sequence of Escherichia coli K-12.</title>
        <authorList>
            <person name="Blattner F.R."/>
            <person name="Plunkett G. III"/>
            <person name="Bloch C.A."/>
            <person name="Perna N.T."/>
            <person name="Burland V."/>
            <person name="Riley M."/>
            <person name="Collado-Vides J."/>
            <person name="Glasner J.D."/>
            <person name="Rode C.K."/>
            <person name="Mayhew G.F."/>
            <person name="Gregor J."/>
            <person name="Davis N.W."/>
            <person name="Kirkpatrick H.A."/>
            <person name="Goeden M.A."/>
            <person name="Rose D.J."/>
            <person name="Mau B."/>
            <person name="Shao Y."/>
        </authorList>
    </citation>
    <scope>NUCLEOTIDE SEQUENCE [LARGE SCALE GENOMIC DNA]</scope>
    <source>
        <strain>K12 / MG1655 / ATCC 47076</strain>
    </source>
</reference>
<protein>
    <recommendedName>
        <fullName evidence="1">Putative protein IntG</fullName>
    </recommendedName>
    <alternativeName>
        <fullName>Putative lambdoid prophage defective integrase</fullName>
    </alternativeName>
</protein>
<feature type="chain" id="PRO_0000252141" description="Putative protein IntG">
    <location>
        <begin position="1"/>
        <end position="92"/>
    </location>
</feature>